<evidence type="ECO:0000255" key="1">
    <source>
        <dbReference type="PROSITE-ProRule" id="PRU01182"/>
    </source>
</evidence>
<evidence type="ECO:0000305" key="2"/>
<sequence length="224" mass="25542">MQNQVESLSLMPREKLLRFGAPALTDEELLAIFLRTGIKGCSVMQLSRHVLQHFHSLRGLMSATQTEFCQLKGLGITQFIQLQACTEMSKRYLQEELKLTQAFKNSENVRFYLQATLENKEREIFQVLFLDNQHRLIKQEEMFLGTINCTTIHPREIIKSALFCNAAALILAHNHPSGNPEPSASDKMVTTKIQAAAELVEIRILDHFVIGKGCYYSFAENRLL</sequence>
<feature type="chain" id="PRO_0000190714" description="UPF0758 protein PM1152">
    <location>
        <begin position="1"/>
        <end position="224"/>
    </location>
</feature>
<feature type="domain" description="MPN" evidence="1">
    <location>
        <begin position="102"/>
        <end position="224"/>
    </location>
</feature>
<feature type="short sequence motif" description="JAMM motif" evidence="1">
    <location>
        <begin position="173"/>
        <end position="186"/>
    </location>
</feature>
<feature type="binding site" evidence="1">
    <location>
        <position position="173"/>
    </location>
    <ligand>
        <name>Zn(2+)</name>
        <dbReference type="ChEBI" id="CHEBI:29105"/>
        <note>catalytic</note>
    </ligand>
</feature>
<feature type="binding site" evidence="1">
    <location>
        <position position="175"/>
    </location>
    <ligand>
        <name>Zn(2+)</name>
        <dbReference type="ChEBI" id="CHEBI:29105"/>
        <note>catalytic</note>
    </ligand>
</feature>
<feature type="binding site" evidence="1">
    <location>
        <position position="186"/>
    </location>
    <ligand>
        <name>Zn(2+)</name>
        <dbReference type="ChEBI" id="CHEBI:29105"/>
        <note>catalytic</note>
    </ligand>
</feature>
<proteinExistence type="inferred from homology"/>
<dbReference type="EMBL" id="AE004439">
    <property type="protein sequence ID" value="AAK03236.1"/>
    <property type="molecule type" value="Genomic_DNA"/>
</dbReference>
<dbReference type="SMR" id="P57913"/>
<dbReference type="STRING" id="272843.PM1152"/>
<dbReference type="EnsemblBacteria" id="AAK03236">
    <property type="protein sequence ID" value="AAK03236"/>
    <property type="gene ID" value="PM1152"/>
</dbReference>
<dbReference type="KEGG" id="pmu:PM1152"/>
<dbReference type="HOGENOM" id="CLU_073529_0_2_6"/>
<dbReference type="OrthoDB" id="9804482at2"/>
<dbReference type="Proteomes" id="UP000000809">
    <property type="component" value="Chromosome"/>
</dbReference>
<dbReference type="GO" id="GO:0046872">
    <property type="term" value="F:metal ion binding"/>
    <property type="evidence" value="ECO:0007669"/>
    <property type="project" value="UniProtKB-KW"/>
</dbReference>
<dbReference type="GO" id="GO:0008237">
    <property type="term" value="F:metallopeptidase activity"/>
    <property type="evidence" value="ECO:0007669"/>
    <property type="project" value="UniProtKB-KW"/>
</dbReference>
<dbReference type="GO" id="GO:0006508">
    <property type="term" value="P:proteolysis"/>
    <property type="evidence" value="ECO:0007669"/>
    <property type="project" value="UniProtKB-KW"/>
</dbReference>
<dbReference type="CDD" id="cd08071">
    <property type="entry name" value="MPN_DUF2466"/>
    <property type="match status" value="1"/>
</dbReference>
<dbReference type="Gene3D" id="3.40.140.10">
    <property type="entry name" value="Cytidine Deaminase, domain 2"/>
    <property type="match status" value="1"/>
</dbReference>
<dbReference type="InterPro" id="IPR037518">
    <property type="entry name" value="MPN"/>
</dbReference>
<dbReference type="InterPro" id="IPR025657">
    <property type="entry name" value="RadC_JAB"/>
</dbReference>
<dbReference type="InterPro" id="IPR010994">
    <property type="entry name" value="RuvA_2-like"/>
</dbReference>
<dbReference type="InterPro" id="IPR001405">
    <property type="entry name" value="UPF0758"/>
</dbReference>
<dbReference type="InterPro" id="IPR020891">
    <property type="entry name" value="UPF0758_CS"/>
</dbReference>
<dbReference type="InterPro" id="IPR046778">
    <property type="entry name" value="UPF0758_N"/>
</dbReference>
<dbReference type="NCBIfam" id="NF000642">
    <property type="entry name" value="PRK00024.1"/>
    <property type="match status" value="1"/>
</dbReference>
<dbReference type="NCBIfam" id="TIGR00608">
    <property type="entry name" value="radc"/>
    <property type="match status" value="1"/>
</dbReference>
<dbReference type="PANTHER" id="PTHR30471">
    <property type="entry name" value="DNA REPAIR PROTEIN RADC"/>
    <property type="match status" value="1"/>
</dbReference>
<dbReference type="PANTHER" id="PTHR30471:SF3">
    <property type="entry name" value="UPF0758 PROTEIN YEES-RELATED"/>
    <property type="match status" value="1"/>
</dbReference>
<dbReference type="Pfam" id="PF04002">
    <property type="entry name" value="RadC"/>
    <property type="match status" value="1"/>
</dbReference>
<dbReference type="Pfam" id="PF20582">
    <property type="entry name" value="UPF0758_N"/>
    <property type="match status" value="1"/>
</dbReference>
<dbReference type="SUPFAM" id="SSF47781">
    <property type="entry name" value="RuvA domain 2-like"/>
    <property type="match status" value="1"/>
</dbReference>
<dbReference type="PROSITE" id="PS50249">
    <property type="entry name" value="MPN"/>
    <property type="match status" value="1"/>
</dbReference>
<dbReference type="PROSITE" id="PS01302">
    <property type="entry name" value="UPF0758"/>
    <property type="match status" value="1"/>
</dbReference>
<reference key="1">
    <citation type="journal article" date="2001" name="Proc. Natl. Acad. Sci. U.S.A.">
        <title>Complete genomic sequence of Pasteurella multocida Pm70.</title>
        <authorList>
            <person name="May B.J."/>
            <person name="Zhang Q."/>
            <person name="Li L.L."/>
            <person name="Paustian M.L."/>
            <person name="Whittam T.S."/>
            <person name="Kapur V."/>
        </authorList>
    </citation>
    <scope>NUCLEOTIDE SEQUENCE [LARGE SCALE GENOMIC DNA]</scope>
    <source>
        <strain>Pm70</strain>
    </source>
</reference>
<keyword id="KW-0378">Hydrolase</keyword>
<keyword id="KW-0479">Metal-binding</keyword>
<keyword id="KW-0482">Metalloprotease</keyword>
<keyword id="KW-0645">Protease</keyword>
<keyword id="KW-1185">Reference proteome</keyword>
<keyword id="KW-0862">Zinc</keyword>
<comment type="similarity">
    <text evidence="2">Belongs to the UPF0758 family.</text>
</comment>
<protein>
    <recommendedName>
        <fullName>UPF0758 protein PM1152</fullName>
    </recommendedName>
</protein>
<accession>P57913</accession>
<name>Y1152_PASMU</name>
<organism>
    <name type="scientific">Pasteurella multocida (strain Pm70)</name>
    <dbReference type="NCBI Taxonomy" id="272843"/>
    <lineage>
        <taxon>Bacteria</taxon>
        <taxon>Pseudomonadati</taxon>
        <taxon>Pseudomonadota</taxon>
        <taxon>Gammaproteobacteria</taxon>
        <taxon>Pasteurellales</taxon>
        <taxon>Pasteurellaceae</taxon>
        <taxon>Pasteurella</taxon>
    </lineage>
</organism>
<gene>
    <name type="ordered locus">PM1152</name>
</gene>